<reference key="1">
    <citation type="journal article" date="2004" name="Genome Res.">
        <title>The status, quality, and expansion of the NIH full-length cDNA project: the Mammalian Gene Collection (MGC).</title>
        <authorList>
            <consortium name="The MGC Project Team"/>
        </authorList>
    </citation>
    <scope>NUCLEOTIDE SEQUENCE [LARGE SCALE MRNA]</scope>
    <source>
        <tissue>Ovary</tissue>
    </source>
</reference>
<sequence length="357" mass="42107">MAARLAWRRGPGAAGQRPWLLLAPLLLVPLLVRPAEALVEGLYCGTRDCYEVLGVSRSASKAEIARAYRQLARRYHPDRYRPEPGDGPGGAPPSAEAFLLVATAYETLKDEETRKDYDYMLDHPEEYYSHYYHYYSRRLAPKVDVRVVILVSVCAISVFQYFSWWNSYNKSISYLATVPKYRIQATEIAKEQGLLKKAKEKGKNKKSKEEIRDEEENIIKNIIKSKIDIKGGYQKPQVRDLLLFQVLLAPVHLCSYIAWYCRWVYNFNIKGKEYGEEERLYIIRKSMKMSQSQFDSLEDHQKEMFLKRELWIKENYEVYKQEQEEELKKKLANDPRWKRYRRWMKNEGPGRLTFVDD</sequence>
<organism>
    <name type="scientific">Rattus norvegicus</name>
    <name type="common">Rat</name>
    <dbReference type="NCBI Taxonomy" id="10116"/>
    <lineage>
        <taxon>Eukaryota</taxon>
        <taxon>Metazoa</taxon>
        <taxon>Chordata</taxon>
        <taxon>Craniata</taxon>
        <taxon>Vertebrata</taxon>
        <taxon>Euteleostomi</taxon>
        <taxon>Mammalia</taxon>
        <taxon>Eutheria</taxon>
        <taxon>Euarchontoglires</taxon>
        <taxon>Glires</taxon>
        <taxon>Rodentia</taxon>
        <taxon>Myomorpha</taxon>
        <taxon>Muroidea</taxon>
        <taxon>Muridae</taxon>
        <taxon>Murinae</taxon>
        <taxon>Rattus</taxon>
    </lineage>
</organism>
<gene>
    <name type="primary">Dnajc25</name>
</gene>
<feature type="chain" id="PRO_0000348571" description="DnaJ homolog subfamily C member 25">
    <location>
        <begin position="1"/>
        <end position="357"/>
    </location>
</feature>
<feature type="transmembrane region" description="Helical" evidence="1">
    <location>
        <begin position="19"/>
        <end position="39"/>
    </location>
</feature>
<feature type="transmembrane region" description="Helical" evidence="1">
    <location>
        <begin position="147"/>
        <end position="167"/>
    </location>
</feature>
<feature type="transmembrane region" description="Helical" evidence="1">
    <location>
        <begin position="241"/>
        <end position="261"/>
    </location>
</feature>
<feature type="domain" description="J" evidence="2">
    <location>
        <begin position="48"/>
        <end position="121"/>
    </location>
</feature>
<name>DJC25_RAT</name>
<accession>Q5BJW9</accession>
<protein>
    <recommendedName>
        <fullName>DnaJ homolog subfamily C member 25</fullName>
    </recommendedName>
</protein>
<comment type="subcellular location">
    <subcellularLocation>
        <location evidence="3">Membrane</location>
        <topology evidence="3">Multi-pass membrane protein</topology>
    </subcellularLocation>
</comment>
<comment type="similarity">
    <text evidence="3">Belongs to the DNAJC25 family.</text>
</comment>
<evidence type="ECO:0000255" key="1"/>
<evidence type="ECO:0000255" key="2">
    <source>
        <dbReference type="PROSITE-ProRule" id="PRU00286"/>
    </source>
</evidence>
<evidence type="ECO:0000305" key="3"/>
<dbReference type="EMBL" id="BC091296">
    <property type="protein sequence ID" value="AAH91296.1"/>
    <property type="molecule type" value="mRNA"/>
</dbReference>
<dbReference type="RefSeq" id="NP_001020192.1">
    <property type="nucleotide sequence ID" value="NM_001025021.1"/>
</dbReference>
<dbReference type="SMR" id="Q5BJW9"/>
<dbReference type="FunCoup" id="Q5BJW9">
    <property type="interactions" value="1765"/>
</dbReference>
<dbReference type="STRING" id="10116.ENSRNOP00000020702"/>
<dbReference type="iPTMnet" id="Q5BJW9"/>
<dbReference type="PhosphoSitePlus" id="Q5BJW9"/>
<dbReference type="PaxDb" id="10116-ENSRNOP00000020702"/>
<dbReference type="GeneID" id="362526"/>
<dbReference type="KEGG" id="rno:362526"/>
<dbReference type="UCSC" id="RGD:1561488">
    <property type="organism name" value="rat"/>
</dbReference>
<dbReference type="AGR" id="RGD:1561488"/>
<dbReference type="CTD" id="548645"/>
<dbReference type="RGD" id="1561488">
    <property type="gene designation" value="Dnajc25"/>
</dbReference>
<dbReference type="eggNOG" id="KOG0722">
    <property type="taxonomic scope" value="Eukaryota"/>
</dbReference>
<dbReference type="InParanoid" id="Q5BJW9"/>
<dbReference type="OrthoDB" id="84426at9989"/>
<dbReference type="PhylomeDB" id="Q5BJW9"/>
<dbReference type="PRO" id="PR:Q5BJW9"/>
<dbReference type="Proteomes" id="UP000002494">
    <property type="component" value="Unplaced"/>
</dbReference>
<dbReference type="GO" id="GO:0005789">
    <property type="term" value="C:endoplasmic reticulum membrane"/>
    <property type="evidence" value="ECO:0000318"/>
    <property type="project" value="GO_Central"/>
</dbReference>
<dbReference type="GO" id="GO:0006457">
    <property type="term" value="P:protein folding"/>
    <property type="evidence" value="ECO:0000318"/>
    <property type="project" value="GO_Central"/>
</dbReference>
<dbReference type="CDD" id="cd06257">
    <property type="entry name" value="DnaJ"/>
    <property type="match status" value="1"/>
</dbReference>
<dbReference type="FunFam" id="1.10.287.110:FF:000036">
    <property type="entry name" value="dnaJ homolog subfamily C member 25"/>
    <property type="match status" value="1"/>
</dbReference>
<dbReference type="Gene3D" id="1.10.287.110">
    <property type="entry name" value="DnaJ domain"/>
    <property type="match status" value="1"/>
</dbReference>
<dbReference type="InterPro" id="IPR001623">
    <property type="entry name" value="DnaJ_domain"/>
</dbReference>
<dbReference type="InterPro" id="IPR044632">
    <property type="entry name" value="DNAJC25-like"/>
</dbReference>
<dbReference type="InterPro" id="IPR036869">
    <property type="entry name" value="J_dom_sf"/>
</dbReference>
<dbReference type="PANTHER" id="PTHR44176">
    <property type="entry name" value="DNAJ HOMOLOG SUBFAMILY C MEMBER 25"/>
    <property type="match status" value="1"/>
</dbReference>
<dbReference type="PANTHER" id="PTHR44176:SF1">
    <property type="entry name" value="DNAJ HOMOLOG SUBFAMILY C MEMBER 25"/>
    <property type="match status" value="1"/>
</dbReference>
<dbReference type="Pfam" id="PF00226">
    <property type="entry name" value="DnaJ"/>
    <property type="match status" value="1"/>
</dbReference>
<dbReference type="PRINTS" id="PR00625">
    <property type="entry name" value="JDOMAIN"/>
</dbReference>
<dbReference type="SMART" id="SM00271">
    <property type="entry name" value="DnaJ"/>
    <property type="match status" value="1"/>
</dbReference>
<dbReference type="SUPFAM" id="SSF46565">
    <property type="entry name" value="Chaperone J-domain"/>
    <property type="match status" value="1"/>
</dbReference>
<dbReference type="PROSITE" id="PS50076">
    <property type="entry name" value="DNAJ_2"/>
    <property type="match status" value="1"/>
</dbReference>
<proteinExistence type="evidence at transcript level"/>
<keyword id="KW-0143">Chaperone</keyword>
<keyword id="KW-0472">Membrane</keyword>
<keyword id="KW-1185">Reference proteome</keyword>
<keyword id="KW-0812">Transmembrane</keyword>
<keyword id="KW-1133">Transmembrane helix</keyword>